<geneLocation type="chloroplast"/>
<accession>Q7GUC7</accession>
<feature type="chain" id="PRO_0000276360" description="Large ribosomal subunit protein uL14c">
    <location>
        <begin position="1"/>
        <end position="122"/>
    </location>
</feature>
<name>RK14_PINKO</name>
<dbReference type="EMBL" id="AY228468">
    <property type="protein sequence ID" value="AAO74074.1"/>
    <property type="molecule type" value="Genomic_DNA"/>
</dbReference>
<dbReference type="RefSeq" id="NP_817226.1">
    <property type="nucleotide sequence ID" value="NC_004677.2"/>
</dbReference>
<dbReference type="SMR" id="Q7GUC7"/>
<dbReference type="GeneID" id="806965"/>
<dbReference type="GO" id="GO:0009507">
    <property type="term" value="C:chloroplast"/>
    <property type="evidence" value="ECO:0007669"/>
    <property type="project" value="UniProtKB-SubCell"/>
</dbReference>
<dbReference type="GO" id="GO:0022625">
    <property type="term" value="C:cytosolic large ribosomal subunit"/>
    <property type="evidence" value="ECO:0007669"/>
    <property type="project" value="TreeGrafter"/>
</dbReference>
<dbReference type="GO" id="GO:0070180">
    <property type="term" value="F:large ribosomal subunit rRNA binding"/>
    <property type="evidence" value="ECO:0007669"/>
    <property type="project" value="TreeGrafter"/>
</dbReference>
<dbReference type="GO" id="GO:0003735">
    <property type="term" value="F:structural constituent of ribosome"/>
    <property type="evidence" value="ECO:0007669"/>
    <property type="project" value="InterPro"/>
</dbReference>
<dbReference type="GO" id="GO:0006412">
    <property type="term" value="P:translation"/>
    <property type="evidence" value="ECO:0007669"/>
    <property type="project" value="UniProtKB-UniRule"/>
</dbReference>
<dbReference type="CDD" id="cd00337">
    <property type="entry name" value="Ribosomal_uL14"/>
    <property type="match status" value="1"/>
</dbReference>
<dbReference type="FunFam" id="2.40.150.20:FF:000002">
    <property type="entry name" value="50S ribosomal protein L14, chloroplastic"/>
    <property type="match status" value="1"/>
</dbReference>
<dbReference type="Gene3D" id="2.40.150.20">
    <property type="entry name" value="Ribosomal protein L14"/>
    <property type="match status" value="1"/>
</dbReference>
<dbReference type="HAMAP" id="MF_01367">
    <property type="entry name" value="Ribosomal_uL14"/>
    <property type="match status" value="1"/>
</dbReference>
<dbReference type="InterPro" id="IPR000218">
    <property type="entry name" value="Ribosomal_uL14"/>
</dbReference>
<dbReference type="InterPro" id="IPR005745">
    <property type="entry name" value="Ribosomal_uL14_bac-type"/>
</dbReference>
<dbReference type="InterPro" id="IPR036853">
    <property type="entry name" value="Ribosomal_uL14_sf"/>
</dbReference>
<dbReference type="NCBIfam" id="TIGR01067">
    <property type="entry name" value="rplN_bact"/>
    <property type="match status" value="1"/>
</dbReference>
<dbReference type="PANTHER" id="PTHR11761">
    <property type="entry name" value="50S/60S RIBOSOMAL PROTEIN L14/L23"/>
    <property type="match status" value="1"/>
</dbReference>
<dbReference type="PANTHER" id="PTHR11761:SF3">
    <property type="entry name" value="LARGE RIBOSOMAL SUBUNIT PROTEIN UL14M"/>
    <property type="match status" value="1"/>
</dbReference>
<dbReference type="Pfam" id="PF00238">
    <property type="entry name" value="Ribosomal_L14"/>
    <property type="match status" value="1"/>
</dbReference>
<dbReference type="SMART" id="SM01374">
    <property type="entry name" value="Ribosomal_L14"/>
    <property type="match status" value="1"/>
</dbReference>
<dbReference type="SUPFAM" id="SSF50193">
    <property type="entry name" value="Ribosomal protein L14"/>
    <property type="match status" value="1"/>
</dbReference>
<reference key="1">
    <citation type="submission" date="2003-02" db="EMBL/GenBank/DDBJ databases">
        <title>Complete nucleotide sequence of Pinus koraiensis.</title>
        <authorList>
            <person name="Noh E.W."/>
            <person name="Lee J.S."/>
            <person name="Choi Y.I."/>
            <person name="Han M.S."/>
            <person name="Yi Y.S."/>
            <person name="Han S.U."/>
        </authorList>
    </citation>
    <scope>NUCLEOTIDE SEQUENCE [LARGE SCALE GENOMIC DNA]</scope>
    <source>
        <strain>KangWon16</strain>
    </source>
</reference>
<gene>
    <name evidence="1" type="primary">rpl14</name>
</gene>
<proteinExistence type="inferred from homology"/>
<organism>
    <name type="scientific">Pinus koraiensis</name>
    <name type="common">Korean pine</name>
    <dbReference type="NCBI Taxonomy" id="88728"/>
    <lineage>
        <taxon>Eukaryota</taxon>
        <taxon>Viridiplantae</taxon>
        <taxon>Streptophyta</taxon>
        <taxon>Embryophyta</taxon>
        <taxon>Tracheophyta</taxon>
        <taxon>Spermatophyta</taxon>
        <taxon>Pinopsida</taxon>
        <taxon>Pinidae</taxon>
        <taxon>Conifers I</taxon>
        <taxon>Pinales</taxon>
        <taxon>Pinaceae</taxon>
        <taxon>Pinus</taxon>
        <taxon>Pinus subgen. Strobus</taxon>
    </lineage>
</organism>
<keyword id="KW-0150">Chloroplast</keyword>
<keyword id="KW-0934">Plastid</keyword>
<keyword id="KW-0687">Ribonucleoprotein</keyword>
<keyword id="KW-0689">Ribosomal protein</keyword>
<keyword id="KW-0694">RNA-binding</keyword>
<keyword id="KW-0699">rRNA-binding</keyword>
<protein>
    <recommendedName>
        <fullName evidence="1">Large ribosomal subunit protein uL14c</fullName>
    </recommendedName>
    <alternativeName>
        <fullName evidence="2">50S ribosomal protein L14, chloroplastic</fullName>
    </alternativeName>
</protein>
<sequence length="122" mass="13451">MIQSQTYLNIADNSGARKIMCIRVLGASNRKCAHIGDVIIAIIKEAVPNMPLEKSEVVRAVVIRTCKEFERDNGMMIRSDDNAAVVIDQEGNPKGTRVFGPVAQELRQLNFTKIVSLAPEVL</sequence>
<evidence type="ECO:0000255" key="1">
    <source>
        <dbReference type="HAMAP-Rule" id="MF_01367"/>
    </source>
</evidence>
<evidence type="ECO:0000305" key="2"/>
<comment type="function">
    <text evidence="1">Binds to 23S rRNA.</text>
</comment>
<comment type="subunit">
    <text evidence="1">Part of the 50S ribosomal subunit.</text>
</comment>
<comment type="subcellular location">
    <subcellularLocation>
        <location>Plastid</location>
        <location>Chloroplast</location>
    </subcellularLocation>
</comment>
<comment type="similarity">
    <text evidence="1">Belongs to the universal ribosomal protein uL14 family.</text>
</comment>